<protein>
    <recommendedName>
        <fullName evidence="1">Ribose-5-phosphate isomerase A</fullName>
        <ecNumber evidence="1">5.3.1.6</ecNumber>
    </recommendedName>
    <alternativeName>
        <fullName evidence="1">Phosphoriboisomerase A</fullName>
        <shortName evidence="1">PRI</shortName>
    </alternativeName>
</protein>
<proteinExistence type="inferred from homology"/>
<reference key="1">
    <citation type="journal article" date="2007" name="PLoS Genet.">
        <title>Patterns and implications of gene gain and loss in the evolution of Prochlorococcus.</title>
        <authorList>
            <person name="Kettler G.C."/>
            <person name="Martiny A.C."/>
            <person name="Huang K."/>
            <person name="Zucker J."/>
            <person name="Coleman M.L."/>
            <person name="Rodrigue S."/>
            <person name="Chen F."/>
            <person name="Lapidus A."/>
            <person name="Ferriera S."/>
            <person name="Johnson J."/>
            <person name="Steglich C."/>
            <person name="Church G.M."/>
            <person name="Richardson P."/>
            <person name="Chisholm S.W."/>
        </authorList>
    </citation>
    <scope>NUCLEOTIDE SEQUENCE [LARGE SCALE GENOMIC DNA]</scope>
    <source>
        <strain>NATL1A</strain>
    </source>
</reference>
<sequence length="236" mass="25092">MDLQNQMKKAVAQAAVDQIQNGMILGLGSGSTAALMIEALAIKIKSGEIKDVVGVTTSFQGEVLASELGIPLKSLSSVSEIDLAIDGADEVDPKFQLIKGGGACHVQEKLVAALAKKFIVVVDSTKLVEKLNLDFKLPVEVLPSAWKQVQKTLINLGGEGNLRMAQKKAGPIVTDQGNLILDLTFRNGIDQPELLETQINNIPGVLENGLFVNLTDEVLVGKVESDVVGVESLKKI</sequence>
<organism>
    <name type="scientific">Prochlorococcus marinus (strain NATL1A)</name>
    <dbReference type="NCBI Taxonomy" id="167555"/>
    <lineage>
        <taxon>Bacteria</taxon>
        <taxon>Bacillati</taxon>
        <taxon>Cyanobacteriota</taxon>
        <taxon>Cyanophyceae</taxon>
        <taxon>Synechococcales</taxon>
        <taxon>Prochlorococcaceae</taxon>
        <taxon>Prochlorococcus</taxon>
    </lineage>
</organism>
<feature type="chain" id="PRO_1000194714" description="Ribose-5-phosphate isomerase A">
    <location>
        <begin position="1"/>
        <end position="236"/>
    </location>
</feature>
<feature type="active site" description="Proton acceptor" evidence="1">
    <location>
        <position position="108"/>
    </location>
</feature>
<feature type="binding site" evidence="1">
    <location>
        <begin position="29"/>
        <end position="32"/>
    </location>
    <ligand>
        <name>substrate</name>
    </ligand>
</feature>
<feature type="binding site" evidence="1">
    <location>
        <begin position="86"/>
        <end position="89"/>
    </location>
    <ligand>
        <name>substrate</name>
    </ligand>
</feature>
<feature type="binding site" evidence="1">
    <location>
        <begin position="99"/>
        <end position="102"/>
    </location>
    <ligand>
        <name>substrate</name>
    </ligand>
</feature>
<feature type="binding site" evidence="1">
    <location>
        <position position="126"/>
    </location>
    <ligand>
        <name>substrate</name>
    </ligand>
</feature>
<accession>A2C4N6</accession>
<name>RPIA_PROM1</name>
<keyword id="KW-0413">Isomerase</keyword>
<gene>
    <name evidence="1" type="primary">rpiA</name>
    <name type="ordered locus">NATL1_18901</name>
</gene>
<evidence type="ECO:0000255" key="1">
    <source>
        <dbReference type="HAMAP-Rule" id="MF_00170"/>
    </source>
</evidence>
<comment type="function">
    <text evidence="1">Catalyzes the reversible conversion of ribose-5-phosphate to ribulose 5-phosphate.</text>
</comment>
<comment type="catalytic activity">
    <reaction evidence="1">
        <text>aldehydo-D-ribose 5-phosphate = D-ribulose 5-phosphate</text>
        <dbReference type="Rhea" id="RHEA:14657"/>
        <dbReference type="ChEBI" id="CHEBI:58121"/>
        <dbReference type="ChEBI" id="CHEBI:58273"/>
        <dbReference type="EC" id="5.3.1.6"/>
    </reaction>
</comment>
<comment type="pathway">
    <text evidence="1">Carbohydrate degradation; pentose phosphate pathway; D-ribose 5-phosphate from D-ribulose 5-phosphate (non-oxidative stage): step 1/1.</text>
</comment>
<comment type="subunit">
    <text evidence="1">Homodimer.</text>
</comment>
<comment type="similarity">
    <text evidence="1">Belongs to the ribose 5-phosphate isomerase family.</text>
</comment>
<dbReference type="EC" id="5.3.1.6" evidence="1"/>
<dbReference type="EMBL" id="CP000553">
    <property type="protein sequence ID" value="ABM76446.1"/>
    <property type="molecule type" value="Genomic_DNA"/>
</dbReference>
<dbReference type="RefSeq" id="WP_011824423.1">
    <property type="nucleotide sequence ID" value="NC_008819.1"/>
</dbReference>
<dbReference type="SMR" id="A2C4N6"/>
<dbReference type="KEGG" id="pme:NATL1_18901"/>
<dbReference type="eggNOG" id="COG0120">
    <property type="taxonomic scope" value="Bacteria"/>
</dbReference>
<dbReference type="HOGENOM" id="CLU_056590_1_1_3"/>
<dbReference type="UniPathway" id="UPA00115">
    <property type="reaction ID" value="UER00412"/>
</dbReference>
<dbReference type="Proteomes" id="UP000002592">
    <property type="component" value="Chromosome"/>
</dbReference>
<dbReference type="GO" id="GO:0005829">
    <property type="term" value="C:cytosol"/>
    <property type="evidence" value="ECO:0007669"/>
    <property type="project" value="TreeGrafter"/>
</dbReference>
<dbReference type="GO" id="GO:0004751">
    <property type="term" value="F:ribose-5-phosphate isomerase activity"/>
    <property type="evidence" value="ECO:0007669"/>
    <property type="project" value="UniProtKB-UniRule"/>
</dbReference>
<dbReference type="GO" id="GO:0006014">
    <property type="term" value="P:D-ribose metabolic process"/>
    <property type="evidence" value="ECO:0007669"/>
    <property type="project" value="TreeGrafter"/>
</dbReference>
<dbReference type="GO" id="GO:0009052">
    <property type="term" value="P:pentose-phosphate shunt, non-oxidative branch"/>
    <property type="evidence" value="ECO:0007669"/>
    <property type="project" value="UniProtKB-UniRule"/>
</dbReference>
<dbReference type="CDD" id="cd01398">
    <property type="entry name" value="RPI_A"/>
    <property type="match status" value="1"/>
</dbReference>
<dbReference type="FunFam" id="3.30.70.260:FF:000018">
    <property type="entry name" value="Ribose-5-phosphate isomerase A"/>
    <property type="match status" value="1"/>
</dbReference>
<dbReference type="FunFam" id="3.40.50.1360:FF:000001">
    <property type="entry name" value="Ribose-5-phosphate isomerase A"/>
    <property type="match status" value="1"/>
</dbReference>
<dbReference type="Gene3D" id="3.30.70.260">
    <property type="match status" value="1"/>
</dbReference>
<dbReference type="Gene3D" id="3.40.50.1360">
    <property type="match status" value="1"/>
</dbReference>
<dbReference type="HAMAP" id="MF_00170">
    <property type="entry name" value="Rib_5P_isom_A"/>
    <property type="match status" value="1"/>
</dbReference>
<dbReference type="InterPro" id="IPR037171">
    <property type="entry name" value="NagB/RpiA_transferase-like"/>
</dbReference>
<dbReference type="InterPro" id="IPR020672">
    <property type="entry name" value="Ribose5P_isomerase_typA_subgr"/>
</dbReference>
<dbReference type="InterPro" id="IPR004788">
    <property type="entry name" value="Ribose5P_isomerase_type_A"/>
</dbReference>
<dbReference type="NCBIfam" id="NF001924">
    <property type="entry name" value="PRK00702.1"/>
    <property type="match status" value="1"/>
</dbReference>
<dbReference type="NCBIfam" id="TIGR00021">
    <property type="entry name" value="rpiA"/>
    <property type="match status" value="1"/>
</dbReference>
<dbReference type="PANTHER" id="PTHR11934">
    <property type="entry name" value="RIBOSE-5-PHOSPHATE ISOMERASE"/>
    <property type="match status" value="1"/>
</dbReference>
<dbReference type="PANTHER" id="PTHR11934:SF0">
    <property type="entry name" value="RIBOSE-5-PHOSPHATE ISOMERASE"/>
    <property type="match status" value="1"/>
</dbReference>
<dbReference type="Pfam" id="PF06026">
    <property type="entry name" value="Rib_5-P_isom_A"/>
    <property type="match status" value="1"/>
</dbReference>
<dbReference type="SUPFAM" id="SSF75445">
    <property type="entry name" value="D-ribose-5-phosphate isomerase (RpiA), lid domain"/>
    <property type="match status" value="1"/>
</dbReference>
<dbReference type="SUPFAM" id="SSF100950">
    <property type="entry name" value="NagB/RpiA/CoA transferase-like"/>
    <property type="match status" value="1"/>
</dbReference>